<accession>Q13UP0</accession>
<evidence type="ECO:0000255" key="1">
    <source>
        <dbReference type="HAMAP-Rule" id="MF_01969"/>
    </source>
</evidence>
<name>KYNB_PARXL</name>
<gene>
    <name evidence="1" type="primary">kynB</name>
    <name type="ordered locus">Bxeno_A3661</name>
    <name type="ORF">Bxe_A0735</name>
</gene>
<organism>
    <name type="scientific">Paraburkholderia xenovorans (strain LB400)</name>
    <dbReference type="NCBI Taxonomy" id="266265"/>
    <lineage>
        <taxon>Bacteria</taxon>
        <taxon>Pseudomonadati</taxon>
        <taxon>Pseudomonadota</taxon>
        <taxon>Betaproteobacteria</taxon>
        <taxon>Burkholderiales</taxon>
        <taxon>Burkholderiaceae</taxon>
        <taxon>Paraburkholderia</taxon>
    </lineage>
</organism>
<protein>
    <recommendedName>
        <fullName evidence="1">Kynurenine formamidase</fullName>
        <shortName evidence="1">KFA</shortName>
        <shortName evidence="1">KFase</shortName>
        <ecNumber evidence="1">3.5.1.9</ecNumber>
    </recommendedName>
    <alternativeName>
        <fullName evidence="1">Arylformamidase</fullName>
    </alternativeName>
    <alternativeName>
        <fullName evidence="1">N-formylkynurenine formamidase</fullName>
        <shortName evidence="1">FKF</shortName>
    </alternativeName>
</protein>
<reference key="1">
    <citation type="journal article" date="2006" name="Proc. Natl. Acad. Sci. U.S.A.">
        <title>Burkholderia xenovorans LB400 harbors a multi-replicon, 9.73-Mbp genome shaped for versatility.</title>
        <authorList>
            <person name="Chain P.S.G."/>
            <person name="Denef V.J."/>
            <person name="Konstantinidis K.T."/>
            <person name="Vergez L.M."/>
            <person name="Agullo L."/>
            <person name="Reyes V.L."/>
            <person name="Hauser L."/>
            <person name="Cordova M."/>
            <person name="Gomez L."/>
            <person name="Gonzalez M."/>
            <person name="Land M."/>
            <person name="Lao V."/>
            <person name="Larimer F."/>
            <person name="LiPuma J.J."/>
            <person name="Mahenthiralingam E."/>
            <person name="Malfatti S.A."/>
            <person name="Marx C.J."/>
            <person name="Parnell J.J."/>
            <person name="Ramette A."/>
            <person name="Richardson P."/>
            <person name="Seeger M."/>
            <person name="Smith D."/>
            <person name="Spilker T."/>
            <person name="Sul W.J."/>
            <person name="Tsoi T.V."/>
            <person name="Ulrich L.E."/>
            <person name="Zhulin I.B."/>
            <person name="Tiedje J.M."/>
        </authorList>
    </citation>
    <scope>NUCLEOTIDE SEQUENCE [LARGE SCALE GENOMIC DNA]</scope>
    <source>
        <strain>LB400</strain>
    </source>
</reference>
<proteinExistence type="inferred from homology"/>
<sequence>MRTLWDITPAVDTATPVWPGDTPVGIERVWRMEAGSPVNVARLTLSPHTGAHTDAPLHYDAEGAAIGDVPLDAYLGRCRVIHCIGASPVVTPQHLTGSLDDLPPRVLLRTYRNAPTNVWDSAFCAVAPDTIDLLASRGVKLIGIDTPSLDPQESKTMDAHHRIRAHRMAILEGIVLDEVAAGDYELIALPLKLTTLDASPVRAILRALPESH</sequence>
<dbReference type="EC" id="3.5.1.9" evidence="1"/>
<dbReference type="EMBL" id="CP000270">
    <property type="protein sequence ID" value="ABE32199.1"/>
    <property type="molecule type" value="Genomic_DNA"/>
</dbReference>
<dbReference type="RefSeq" id="WP_011489696.1">
    <property type="nucleotide sequence ID" value="NC_007951.1"/>
</dbReference>
<dbReference type="SMR" id="Q13UP0"/>
<dbReference type="STRING" id="266265.Bxe_A0735"/>
<dbReference type="KEGG" id="bxb:DR64_2903"/>
<dbReference type="KEGG" id="bxe:Bxe_A0735"/>
<dbReference type="PATRIC" id="fig|266265.5.peg.3859"/>
<dbReference type="eggNOG" id="COG1878">
    <property type="taxonomic scope" value="Bacteria"/>
</dbReference>
<dbReference type="OrthoDB" id="9796085at2"/>
<dbReference type="UniPathway" id="UPA00333">
    <property type="reaction ID" value="UER00454"/>
</dbReference>
<dbReference type="Proteomes" id="UP000001817">
    <property type="component" value="Chromosome 1"/>
</dbReference>
<dbReference type="GO" id="GO:0004061">
    <property type="term" value="F:arylformamidase activity"/>
    <property type="evidence" value="ECO:0000250"/>
    <property type="project" value="UniProtKB"/>
</dbReference>
<dbReference type="GO" id="GO:0004328">
    <property type="term" value="F:formamidase activity"/>
    <property type="evidence" value="ECO:0007669"/>
    <property type="project" value="InterPro"/>
</dbReference>
<dbReference type="GO" id="GO:0008270">
    <property type="term" value="F:zinc ion binding"/>
    <property type="evidence" value="ECO:0007669"/>
    <property type="project" value="UniProtKB-UniRule"/>
</dbReference>
<dbReference type="GO" id="GO:0043420">
    <property type="term" value="P:anthranilate metabolic process"/>
    <property type="evidence" value="ECO:0000250"/>
    <property type="project" value="UniProtKB"/>
</dbReference>
<dbReference type="GO" id="GO:0019441">
    <property type="term" value="P:L-tryptophan catabolic process to kynurenine"/>
    <property type="evidence" value="ECO:0000250"/>
    <property type="project" value="UniProtKB"/>
</dbReference>
<dbReference type="FunFam" id="3.50.30.50:FF:000001">
    <property type="entry name" value="Kynurenine formamidase"/>
    <property type="match status" value="1"/>
</dbReference>
<dbReference type="Gene3D" id="3.50.30.50">
    <property type="entry name" value="Putative cyclase"/>
    <property type="match status" value="1"/>
</dbReference>
<dbReference type="HAMAP" id="MF_01969">
    <property type="entry name" value="KynB"/>
    <property type="match status" value="1"/>
</dbReference>
<dbReference type="InterPro" id="IPR007325">
    <property type="entry name" value="KFase/CYL"/>
</dbReference>
<dbReference type="InterPro" id="IPR037175">
    <property type="entry name" value="KFase_sf"/>
</dbReference>
<dbReference type="InterPro" id="IPR017484">
    <property type="entry name" value="Kynurenine_formamidase_bac"/>
</dbReference>
<dbReference type="NCBIfam" id="TIGR03035">
    <property type="entry name" value="trp_arylform"/>
    <property type="match status" value="1"/>
</dbReference>
<dbReference type="PANTHER" id="PTHR31118">
    <property type="entry name" value="CYCLASE-LIKE PROTEIN 2"/>
    <property type="match status" value="1"/>
</dbReference>
<dbReference type="PANTHER" id="PTHR31118:SF32">
    <property type="entry name" value="KYNURENINE FORMAMIDASE"/>
    <property type="match status" value="1"/>
</dbReference>
<dbReference type="Pfam" id="PF04199">
    <property type="entry name" value="Cyclase"/>
    <property type="match status" value="1"/>
</dbReference>
<dbReference type="SUPFAM" id="SSF102198">
    <property type="entry name" value="Putative cyclase"/>
    <property type="match status" value="1"/>
</dbReference>
<keyword id="KW-0378">Hydrolase</keyword>
<keyword id="KW-0479">Metal-binding</keyword>
<keyword id="KW-1185">Reference proteome</keyword>
<keyword id="KW-0823">Tryptophan catabolism</keyword>
<keyword id="KW-0862">Zinc</keyword>
<feature type="chain" id="PRO_0000362119" description="Kynurenine formamidase">
    <location>
        <begin position="1"/>
        <end position="212"/>
    </location>
</feature>
<feature type="active site" description="Proton donor/acceptor" evidence="1">
    <location>
        <position position="58"/>
    </location>
</feature>
<feature type="binding site" evidence="1">
    <location>
        <position position="18"/>
    </location>
    <ligand>
        <name>substrate</name>
    </ligand>
</feature>
<feature type="binding site" evidence="1">
    <location>
        <position position="48"/>
    </location>
    <ligand>
        <name>Zn(2+)</name>
        <dbReference type="ChEBI" id="CHEBI:29105"/>
        <label>1</label>
    </ligand>
</feature>
<feature type="binding site" evidence="1">
    <location>
        <position position="52"/>
    </location>
    <ligand>
        <name>Zn(2+)</name>
        <dbReference type="ChEBI" id="CHEBI:29105"/>
        <label>1</label>
    </ligand>
</feature>
<feature type="binding site" evidence="1">
    <location>
        <position position="54"/>
    </location>
    <ligand>
        <name>Zn(2+)</name>
        <dbReference type="ChEBI" id="CHEBI:29105"/>
        <label>1</label>
    </ligand>
</feature>
<feature type="binding site" evidence="1">
    <location>
        <position position="54"/>
    </location>
    <ligand>
        <name>Zn(2+)</name>
        <dbReference type="ChEBI" id="CHEBI:29105"/>
        <label>2</label>
    </ligand>
</feature>
<feature type="binding site" evidence="1">
    <location>
        <position position="160"/>
    </location>
    <ligand>
        <name>Zn(2+)</name>
        <dbReference type="ChEBI" id="CHEBI:29105"/>
        <label>2</label>
    </ligand>
</feature>
<feature type="binding site" evidence="1">
    <location>
        <position position="172"/>
    </location>
    <ligand>
        <name>Zn(2+)</name>
        <dbReference type="ChEBI" id="CHEBI:29105"/>
        <label>1</label>
    </ligand>
</feature>
<feature type="binding site" evidence="1">
    <location>
        <position position="172"/>
    </location>
    <ligand>
        <name>Zn(2+)</name>
        <dbReference type="ChEBI" id="CHEBI:29105"/>
        <label>2</label>
    </ligand>
</feature>
<comment type="function">
    <text evidence="1">Catalyzes the hydrolysis of N-formyl-L-kynurenine to L-kynurenine, the second step in the kynurenine pathway of tryptophan degradation.</text>
</comment>
<comment type="catalytic activity">
    <reaction evidence="1">
        <text>N-formyl-L-kynurenine + H2O = L-kynurenine + formate + H(+)</text>
        <dbReference type="Rhea" id="RHEA:13009"/>
        <dbReference type="ChEBI" id="CHEBI:15377"/>
        <dbReference type="ChEBI" id="CHEBI:15378"/>
        <dbReference type="ChEBI" id="CHEBI:15740"/>
        <dbReference type="ChEBI" id="CHEBI:57959"/>
        <dbReference type="ChEBI" id="CHEBI:58629"/>
        <dbReference type="EC" id="3.5.1.9"/>
    </reaction>
</comment>
<comment type="cofactor">
    <cofactor evidence="1">
        <name>Zn(2+)</name>
        <dbReference type="ChEBI" id="CHEBI:29105"/>
    </cofactor>
    <text evidence="1">Binds 2 zinc ions per subunit.</text>
</comment>
<comment type="pathway">
    <text evidence="1">Amino-acid degradation; L-tryptophan degradation via kynurenine pathway; L-kynurenine from L-tryptophan: step 2/2.</text>
</comment>
<comment type="subunit">
    <text evidence="1">Homodimer.</text>
</comment>
<comment type="similarity">
    <text evidence="1">Belongs to the Cyclase 1 superfamily. KynB family.</text>
</comment>